<dbReference type="EC" id="4.2.3.153" evidence="1"/>
<dbReference type="EMBL" id="AE009439">
    <property type="protein sequence ID" value="AAM02815.1"/>
    <property type="molecule type" value="Genomic_DNA"/>
</dbReference>
<dbReference type="RefSeq" id="WP_011019970.1">
    <property type="nucleotide sequence ID" value="NC_003551.1"/>
</dbReference>
<dbReference type="SMR" id="Q8TUZ9"/>
<dbReference type="FunCoup" id="Q8TUZ9">
    <property type="interactions" value="84"/>
</dbReference>
<dbReference type="STRING" id="190192.MK1602"/>
<dbReference type="PaxDb" id="190192-MK1602"/>
<dbReference type="EnsemblBacteria" id="AAM02815">
    <property type="protein sequence ID" value="AAM02815"/>
    <property type="gene ID" value="MK1602"/>
</dbReference>
<dbReference type="GeneID" id="1478197"/>
<dbReference type="KEGG" id="mka:MK1602"/>
<dbReference type="PATRIC" id="fig|190192.8.peg.1764"/>
<dbReference type="HOGENOM" id="CLU_068659_0_0_2"/>
<dbReference type="InParanoid" id="Q8TUZ9"/>
<dbReference type="OrthoDB" id="81473at2157"/>
<dbReference type="UniPathway" id="UPA00080"/>
<dbReference type="Proteomes" id="UP000001826">
    <property type="component" value="Chromosome"/>
</dbReference>
<dbReference type="GO" id="GO:0016830">
    <property type="term" value="F:carbon-carbon lyase activity"/>
    <property type="evidence" value="ECO:0007669"/>
    <property type="project" value="UniProtKB-UniRule"/>
</dbReference>
<dbReference type="GO" id="GO:2001120">
    <property type="term" value="P:methanofuran biosynthetic process"/>
    <property type="evidence" value="ECO:0007669"/>
    <property type="project" value="UniProtKB-UniRule"/>
</dbReference>
<dbReference type="HAMAP" id="MF_00681">
    <property type="entry name" value="MfnB"/>
    <property type="match status" value="1"/>
</dbReference>
<dbReference type="InterPro" id="IPR007565">
    <property type="entry name" value="4HFCP_synth"/>
</dbReference>
<dbReference type="InterPro" id="IPR035081">
    <property type="entry name" value="4HFCP_synth_arc"/>
</dbReference>
<dbReference type="InterPro" id="IPR011060">
    <property type="entry name" value="RibuloseP-bd_barrel"/>
</dbReference>
<dbReference type="NCBIfam" id="NF002573">
    <property type="entry name" value="PRK02227.1-1"/>
    <property type="match status" value="1"/>
</dbReference>
<dbReference type="NCBIfam" id="NF002575">
    <property type="entry name" value="PRK02227.1-3"/>
    <property type="match status" value="1"/>
</dbReference>
<dbReference type="Pfam" id="PF04476">
    <property type="entry name" value="4HFCP_synth"/>
    <property type="match status" value="1"/>
</dbReference>
<dbReference type="PIRSF" id="PIRSF015957">
    <property type="entry name" value="UCP015957"/>
    <property type="match status" value="1"/>
</dbReference>
<dbReference type="SUPFAM" id="SSF51366">
    <property type="entry name" value="Ribulose-phoshate binding barrel"/>
    <property type="match status" value="1"/>
</dbReference>
<comment type="function">
    <text evidence="1">Catalyzes the formation of 4-(hydroxymethyl)-2-furancarboxaldehyde phosphate (4-HFC-P) from two molecules of glyceraldehyde-3-P (GA-3-P).</text>
</comment>
<comment type="catalytic activity">
    <reaction evidence="1">
        <text>2 D-glyceraldehyde 3-phosphate = 4-(hydroxymethyl)-2-furancarboxaldehyde phosphate + phosphate + 2 H2O</text>
        <dbReference type="Rhea" id="RHEA:43536"/>
        <dbReference type="ChEBI" id="CHEBI:15377"/>
        <dbReference type="ChEBI" id="CHEBI:43474"/>
        <dbReference type="ChEBI" id="CHEBI:59776"/>
        <dbReference type="ChEBI" id="CHEBI:83407"/>
        <dbReference type="EC" id="4.2.3.153"/>
    </reaction>
</comment>
<comment type="pathway">
    <text evidence="1">Cofactor biosynthesis; methanofuran biosynthesis.</text>
</comment>
<comment type="similarity">
    <text evidence="1">Belongs to the MfnB family.</text>
</comment>
<organism>
    <name type="scientific">Methanopyrus kandleri (strain AV19 / DSM 6324 / JCM 9639 / NBRC 100938)</name>
    <dbReference type="NCBI Taxonomy" id="190192"/>
    <lineage>
        <taxon>Archaea</taxon>
        <taxon>Methanobacteriati</taxon>
        <taxon>Methanobacteriota</taxon>
        <taxon>Methanomada group</taxon>
        <taxon>Methanopyri</taxon>
        <taxon>Methanopyrales</taxon>
        <taxon>Methanopyraceae</taxon>
        <taxon>Methanopyrus</taxon>
    </lineage>
</organism>
<evidence type="ECO:0000255" key="1">
    <source>
        <dbReference type="HAMAP-Rule" id="MF_00681"/>
    </source>
</evidence>
<sequence length="237" mass="25404">MRPRLLVSPVNRDEALEAVEGGAHIIDVKNPEEGSLGANFPWVIREIMEVVPEDREVSATVGDVPYKPGTVAQAVLGVAAVGVDYAKVGLYGTKTEEEALEVMRACSRAVREFGYDTRVVAAGYADAHRVGSLDPMSVPEVAAEAECDVAMVDTAVKDGKRLFDFLSEEEVGEFVDSAHEHGLEVALAGSLRHEDMPIVRDLGADIVGVRGAACERGDRNRGAIRSHLVRKLAEALA</sequence>
<protein>
    <recommendedName>
        <fullName evidence="1">(5-formylfuran-3-yl)methyl phosphate synthase</fullName>
        <ecNumber evidence="1">4.2.3.153</ecNumber>
    </recommendedName>
    <alternativeName>
        <fullName evidence="1">4-(hydroxymethyl)-2-furancarboxaldehyde-phosphate synthase</fullName>
        <shortName evidence="1">4-HFC-P synthase</shortName>
    </alternativeName>
</protein>
<reference key="1">
    <citation type="journal article" date="2002" name="Proc. Natl. Acad. Sci. U.S.A.">
        <title>The complete genome of hyperthermophile Methanopyrus kandleri AV19 and monophyly of archaeal methanogens.</title>
        <authorList>
            <person name="Slesarev A.I."/>
            <person name="Mezhevaya K.V."/>
            <person name="Makarova K.S."/>
            <person name="Polushin N.N."/>
            <person name="Shcherbinina O.V."/>
            <person name="Shakhova V.V."/>
            <person name="Belova G.I."/>
            <person name="Aravind L."/>
            <person name="Natale D.A."/>
            <person name="Rogozin I.B."/>
            <person name="Tatusov R.L."/>
            <person name="Wolf Y.I."/>
            <person name="Stetter K.O."/>
            <person name="Malykh A.G."/>
            <person name="Koonin E.V."/>
            <person name="Kozyavkin S.A."/>
        </authorList>
    </citation>
    <scope>NUCLEOTIDE SEQUENCE [LARGE SCALE GENOMIC DNA]</scope>
    <source>
        <strain>AV19 / DSM 6324 / JCM 9639 / NBRC 100938</strain>
    </source>
</reference>
<gene>
    <name evidence="1" type="primary">mfnB</name>
    <name type="ordered locus">MK1602</name>
</gene>
<keyword id="KW-0456">Lyase</keyword>
<keyword id="KW-1185">Reference proteome</keyword>
<keyword id="KW-0704">Schiff base</keyword>
<proteinExistence type="inferred from homology"/>
<name>MFNB_METKA</name>
<feature type="chain" id="PRO_0000134866" description="(5-formylfuran-3-yl)methyl phosphate synthase">
    <location>
        <begin position="1"/>
        <end position="237"/>
    </location>
</feature>
<feature type="active site" description="Schiff-base intermediate with substrate" evidence="1">
    <location>
        <position position="29"/>
    </location>
</feature>
<feature type="active site" description="Proton acceptor" evidence="1">
    <location>
        <position position="87"/>
    </location>
</feature>
<accession>Q8TUZ9</accession>